<evidence type="ECO:0000255" key="1">
    <source>
        <dbReference type="HAMAP-Rule" id="MF_00360"/>
    </source>
</evidence>
<evidence type="ECO:0000305" key="2"/>
<gene>
    <name evidence="1" type="primary">rpsF</name>
    <name type="ordered locus">llmg_2475</name>
</gene>
<proteinExistence type="evidence at protein level"/>
<sequence>MTKYEILYIIRPNIDEEAKTALVERFDAILTENGAANLESKDWEKRKLAYEINDFREGIYHIATFEAETTSEALSEFDRLAKINLDILRHMIVKVEA</sequence>
<comment type="function">
    <text evidence="1">Binds together with bS18 to 16S ribosomal RNA.</text>
</comment>
<comment type="similarity">
    <text evidence="1">Belongs to the bacterial ribosomal protein bS6 family.</text>
</comment>
<reference key="1">
    <citation type="journal article" date="2007" name="J. Bacteriol.">
        <title>The complete genome sequence of the lactic acid bacterial paradigm Lactococcus lactis subsp. cremoris MG1363.</title>
        <authorList>
            <person name="Wegmann U."/>
            <person name="O'Connell-Motherway M."/>
            <person name="Zomer A."/>
            <person name="Buist G."/>
            <person name="Shearman C."/>
            <person name="Canchaya C."/>
            <person name="Ventura M."/>
            <person name="Goesmann A."/>
            <person name="Gasson M.J."/>
            <person name="Kuipers O.P."/>
            <person name="van Sinderen D."/>
            <person name="Kok J."/>
        </authorList>
    </citation>
    <scope>NUCLEOTIDE SEQUENCE [LARGE SCALE GENOMIC DNA]</scope>
    <source>
        <strain>MG1363</strain>
    </source>
</reference>
<name>RS6_LACLM</name>
<accession>A2RNZ4</accession>
<keyword id="KW-0002">3D-structure</keyword>
<keyword id="KW-0687">Ribonucleoprotein</keyword>
<keyword id="KW-0689">Ribosomal protein</keyword>
<keyword id="KW-0694">RNA-binding</keyword>
<keyword id="KW-0699">rRNA-binding</keyword>
<organism>
    <name type="scientific">Lactococcus lactis subsp. cremoris (strain MG1363)</name>
    <dbReference type="NCBI Taxonomy" id="416870"/>
    <lineage>
        <taxon>Bacteria</taxon>
        <taxon>Bacillati</taxon>
        <taxon>Bacillota</taxon>
        <taxon>Bacilli</taxon>
        <taxon>Lactobacillales</taxon>
        <taxon>Streptococcaceae</taxon>
        <taxon>Lactococcus</taxon>
        <taxon>Lactococcus cremoris subsp. cremoris</taxon>
    </lineage>
</organism>
<protein>
    <recommendedName>
        <fullName evidence="1">Small ribosomal subunit protein bS6</fullName>
    </recommendedName>
    <alternativeName>
        <fullName evidence="2">30S ribosomal protein S6</fullName>
    </alternativeName>
</protein>
<dbReference type="EMBL" id="AM406671">
    <property type="protein sequence ID" value="CAL99039.1"/>
    <property type="molecule type" value="Genomic_DNA"/>
</dbReference>
<dbReference type="RefSeq" id="WP_011677242.1">
    <property type="nucleotide sequence ID" value="NC_009004.1"/>
</dbReference>
<dbReference type="PDB" id="5MYJ">
    <property type="method" value="EM"/>
    <property type="resolution" value="5.60 A"/>
    <property type="chains" value="AF=1-97"/>
</dbReference>
<dbReference type="PDBsum" id="5MYJ"/>
<dbReference type="EMDB" id="EMD-3581"/>
<dbReference type="SMR" id="A2RNZ4"/>
<dbReference type="STRING" id="416870.llmg_2475"/>
<dbReference type="GeneID" id="61110521"/>
<dbReference type="KEGG" id="llm:llmg_2475"/>
<dbReference type="eggNOG" id="COG0360">
    <property type="taxonomic scope" value="Bacteria"/>
</dbReference>
<dbReference type="HOGENOM" id="CLU_113441_5_3_9"/>
<dbReference type="OrthoDB" id="9812702at2"/>
<dbReference type="PhylomeDB" id="A2RNZ4"/>
<dbReference type="Proteomes" id="UP000000364">
    <property type="component" value="Chromosome"/>
</dbReference>
<dbReference type="GO" id="GO:0005737">
    <property type="term" value="C:cytoplasm"/>
    <property type="evidence" value="ECO:0007669"/>
    <property type="project" value="UniProtKB-ARBA"/>
</dbReference>
<dbReference type="GO" id="GO:1990904">
    <property type="term" value="C:ribonucleoprotein complex"/>
    <property type="evidence" value="ECO:0007669"/>
    <property type="project" value="UniProtKB-KW"/>
</dbReference>
<dbReference type="GO" id="GO:0005840">
    <property type="term" value="C:ribosome"/>
    <property type="evidence" value="ECO:0007669"/>
    <property type="project" value="UniProtKB-KW"/>
</dbReference>
<dbReference type="GO" id="GO:0070181">
    <property type="term" value="F:small ribosomal subunit rRNA binding"/>
    <property type="evidence" value="ECO:0007669"/>
    <property type="project" value="TreeGrafter"/>
</dbReference>
<dbReference type="GO" id="GO:0003735">
    <property type="term" value="F:structural constituent of ribosome"/>
    <property type="evidence" value="ECO:0007669"/>
    <property type="project" value="InterPro"/>
</dbReference>
<dbReference type="GO" id="GO:0006412">
    <property type="term" value="P:translation"/>
    <property type="evidence" value="ECO:0007669"/>
    <property type="project" value="UniProtKB-UniRule"/>
</dbReference>
<dbReference type="CDD" id="cd00473">
    <property type="entry name" value="bS6"/>
    <property type="match status" value="1"/>
</dbReference>
<dbReference type="FunFam" id="3.30.70.60:FF:000002">
    <property type="entry name" value="30S ribosomal protein S6"/>
    <property type="match status" value="1"/>
</dbReference>
<dbReference type="Gene3D" id="3.30.70.60">
    <property type="match status" value="1"/>
</dbReference>
<dbReference type="HAMAP" id="MF_00360">
    <property type="entry name" value="Ribosomal_bS6"/>
    <property type="match status" value="1"/>
</dbReference>
<dbReference type="InterPro" id="IPR000529">
    <property type="entry name" value="Ribosomal_bS6"/>
</dbReference>
<dbReference type="InterPro" id="IPR035980">
    <property type="entry name" value="Ribosomal_bS6_sf"/>
</dbReference>
<dbReference type="InterPro" id="IPR020814">
    <property type="entry name" value="Ribosomal_S6_plastid/chlpt"/>
</dbReference>
<dbReference type="InterPro" id="IPR014717">
    <property type="entry name" value="Transl_elong_EF1B/ribsomal_bS6"/>
</dbReference>
<dbReference type="NCBIfam" id="TIGR00166">
    <property type="entry name" value="S6"/>
    <property type="match status" value="1"/>
</dbReference>
<dbReference type="PANTHER" id="PTHR21011">
    <property type="entry name" value="MITOCHONDRIAL 28S RIBOSOMAL PROTEIN S6"/>
    <property type="match status" value="1"/>
</dbReference>
<dbReference type="PANTHER" id="PTHR21011:SF1">
    <property type="entry name" value="SMALL RIBOSOMAL SUBUNIT PROTEIN BS6M"/>
    <property type="match status" value="1"/>
</dbReference>
<dbReference type="Pfam" id="PF01250">
    <property type="entry name" value="Ribosomal_S6"/>
    <property type="match status" value="1"/>
</dbReference>
<dbReference type="SUPFAM" id="SSF54995">
    <property type="entry name" value="Ribosomal protein S6"/>
    <property type="match status" value="1"/>
</dbReference>
<feature type="chain" id="PRO_1000005284" description="Small ribosomal subunit protein bS6">
    <location>
        <begin position="1"/>
        <end position="97"/>
    </location>
</feature>